<proteinExistence type="evidence at protein level"/>
<gene>
    <name type="primary">yihI</name>
    <name type="ordered locus">b3866</name>
    <name type="ordered locus">JW3837</name>
</gene>
<organism>
    <name type="scientific">Escherichia coli (strain K12)</name>
    <dbReference type="NCBI Taxonomy" id="83333"/>
    <lineage>
        <taxon>Bacteria</taxon>
        <taxon>Pseudomonadati</taxon>
        <taxon>Pseudomonadota</taxon>
        <taxon>Gammaproteobacteria</taxon>
        <taxon>Enterobacterales</taxon>
        <taxon>Enterobacteriaceae</taxon>
        <taxon>Escherichia</taxon>
    </lineage>
</organism>
<name>YIHI_ECOLI</name>
<comment type="function">
    <text evidence="2">A GTPase-activating protein (GAP) that modifies Der/EngA GTPase function, negatively regulating cell growth, probably via ribosome assembly. Stimulates the GTPase activity of Der; a construct missing the first 45 residues is even more stimulatory. Does not stimulate 2 other GTPases (ObgE and Era). Overexpression inhibits cell growth; precursor 16S rRNA accumulates, the 23S rRNA is 6-7 bases longer than usual, and 50S ribosomal subunits are improperly assembled, leading to 45S subunits lacking proteins L9, L18 and L25. Overexpression of Der in the same cells suppresses the 50S subunit assembly defect, corroborating that YihI and Der interact.</text>
</comment>
<comment type="subunit">
    <text evidence="2">Homodimer. Interacts with Der/EngA via the last 78 residues. Interaction with Der occurs at a 1:1 stoichiometry, suggesting the dimer dissociates to interact with Der.</text>
</comment>
<comment type="interaction">
    <interactant intactId="EBI-552497">
        <id>P0A8H6</id>
    </interactant>
    <interactant intactId="EBI-561065">
        <id>P0A8A8</id>
        <label>rimP</label>
    </interactant>
    <organismsDiffer>false</organismsDiffer>
    <experiments>2</experiments>
</comment>
<comment type="interaction">
    <interactant intactId="EBI-552497">
        <id>P0A8H6</id>
    </interactant>
    <interactant intactId="EBI-548165">
        <id>P37634</id>
        <label>rlmJ</label>
    </interactant>
    <organismsDiffer>false</organismsDiffer>
    <experiments>2</experiments>
</comment>
<comment type="induction">
    <text evidence="2">Highly expressed during the lag phase, not expressed in later phases.</text>
</comment>
<comment type="disruption phenotype">
    <text evidence="2">Dispensable for cell growth, cells lacking this gene have a shorter lag phase.</text>
</comment>
<comment type="miscellaneous">
    <text>This is a highly hydrophilic protein; there is a stretch of highly charged residues in the N-terminus and a stretch of acidic residues in the C-terminus.</text>
</comment>
<comment type="similarity">
    <text evidence="3">Belongs to the YihI family.</text>
</comment>
<accession>P0A8H6</accession>
<accession>P32130</accession>
<accession>Q2M8G3</accession>
<dbReference type="EMBL" id="D16509">
    <property type="protein sequence ID" value="BAA03960.1"/>
    <property type="molecule type" value="Genomic_DNA"/>
</dbReference>
<dbReference type="EMBL" id="L19201">
    <property type="protein sequence ID" value="AAB03000.1"/>
    <property type="molecule type" value="Genomic_DNA"/>
</dbReference>
<dbReference type="EMBL" id="U00096">
    <property type="protein sequence ID" value="AAC76863.1"/>
    <property type="molecule type" value="Genomic_DNA"/>
</dbReference>
<dbReference type="EMBL" id="AP009048">
    <property type="protein sequence ID" value="BAE77443.1"/>
    <property type="molecule type" value="Genomic_DNA"/>
</dbReference>
<dbReference type="PIR" id="S40811">
    <property type="entry name" value="S40811"/>
</dbReference>
<dbReference type="RefSeq" id="NP_418302.1">
    <property type="nucleotide sequence ID" value="NC_000913.3"/>
</dbReference>
<dbReference type="RefSeq" id="WP_001295266.1">
    <property type="nucleotide sequence ID" value="NZ_SSZK01000026.1"/>
</dbReference>
<dbReference type="SMR" id="P0A8H6"/>
<dbReference type="BioGRID" id="4262990">
    <property type="interactions" value="34"/>
</dbReference>
<dbReference type="BioGRID" id="852660">
    <property type="interactions" value="1"/>
</dbReference>
<dbReference type="DIP" id="DIP-47963N"/>
<dbReference type="FunCoup" id="P0A8H6">
    <property type="interactions" value="188"/>
</dbReference>
<dbReference type="IntAct" id="P0A8H6">
    <property type="interactions" value="28"/>
</dbReference>
<dbReference type="STRING" id="511145.b3866"/>
<dbReference type="jPOST" id="P0A8H6"/>
<dbReference type="PaxDb" id="511145-b3866"/>
<dbReference type="EnsemblBacteria" id="AAC76863">
    <property type="protein sequence ID" value="AAC76863"/>
    <property type="gene ID" value="b3866"/>
</dbReference>
<dbReference type="GeneID" id="75204333"/>
<dbReference type="GeneID" id="948363"/>
<dbReference type="KEGG" id="ecj:JW3837"/>
<dbReference type="KEGG" id="eco:b3866"/>
<dbReference type="KEGG" id="ecoc:C3026_20895"/>
<dbReference type="PATRIC" id="fig|1411691.4.peg.2847"/>
<dbReference type="EchoBASE" id="EB1781"/>
<dbReference type="eggNOG" id="COG3078">
    <property type="taxonomic scope" value="Bacteria"/>
</dbReference>
<dbReference type="HOGENOM" id="CLU_094104_2_0_6"/>
<dbReference type="InParanoid" id="P0A8H6"/>
<dbReference type="OMA" id="ENNECLN"/>
<dbReference type="OrthoDB" id="5677577at2"/>
<dbReference type="PhylomeDB" id="P0A8H6"/>
<dbReference type="BioCyc" id="EcoCyc:EG11835-MONOMER"/>
<dbReference type="BioCyc" id="MetaCyc:EG11835-MONOMER"/>
<dbReference type="PRO" id="PR:P0A8H6"/>
<dbReference type="Proteomes" id="UP000000625">
    <property type="component" value="Chromosome"/>
</dbReference>
<dbReference type="GO" id="GO:0005829">
    <property type="term" value="C:cytosol"/>
    <property type="evidence" value="ECO:0000314"/>
    <property type="project" value="EcoCyc"/>
</dbReference>
<dbReference type="GO" id="GO:0005096">
    <property type="term" value="F:GTPase activator activity"/>
    <property type="evidence" value="ECO:0000314"/>
    <property type="project" value="EcoCyc"/>
</dbReference>
<dbReference type="GO" id="GO:0090071">
    <property type="term" value="P:negative regulation of ribosome biogenesis"/>
    <property type="evidence" value="ECO:0000315"/>
    <property type="project" value="EcoCyc"/>
</dbReference>
<dbReference type="GO" id="GO:0042254">
    <property type="term" value="P:ribosome biogenesis"/>
    <property type="evidence" value="ECO:0007669"/>
    <property type="project" value="UniProtKB-KW"/>
</dbReference>
<dbReference type="HAMAP" id="MF_01058">
    <property type="entry name" value="GAP_YihI"/>
    <property type="match status" value="1"/>
</dbReference>
<dbReference type="InterPro" id="IPR007336">
    <property type="entry name" value="YihI"/>
</dbReference>
<dbReference type="NCBIfam" id="NF003560">
    <property type="entry name" value="PRK05244.1-1"/>
    <property type="match status" value="1"/>
</dbReference>
<dbReference type="Pfam" id="PF04220">
    <property type="entry name" value="YihI"/>
    <property type="match status" value="1"/>
</dbReference>
<reference key="1">
    <citation type="submission" date="1994-09" db="EMBL/GenBank/DDBJ databases">
        <authorList>
            <person name="Wachi M."/>
            <person name="Hamano-Takaku F."/>
            <person name="Nagano K."/>
            <person name="Kobayashi M."/>
            <person name="Yukawa H."/>
            <person name="Nagai K."/>
        </authorList>
    </citation>
    <scope>NUCLEOTIDE SEQUENCE [GENOMIC DNA]</scope>
    <source>
        <strain>K12 / W3110 / ATCC 27325 / DSM 5911</strain>
    </source>
</reference>
<reference key="2">
    <citation type="journal article" date="1993" name="Nucleic Acids Res.">
        <title>Analysis of the Escherichia coli genome. III. DNA sequence of the region from 87.2 to 89.2 minutes.</title>
        <authorList>
            <person name="Plunkett G. III"/>
            <person name="Burland V."/>
            <person name="Daniels D.L."/>
            <person name="Blattner F.R."/>
        </authorList>
    </citation>
    <scope>NUCLEOTIDE SEQUENCE [LARGE SCALE GENOMIC DNA]</scope>
    <source>
        <strain>K12 / MG1655 / ATCC 47076</strain>
    </source>
</reference>
<reference key="3">
    <citation type="journal article" date="1997" name="Science">
        <title>The complete genome sequence of Escherichia coli K-12.</title>
        <authorList>
            <person name="Blattner F.R."/>
            <person name="Plunkett G. III"/>
            <person name="Bloch C.A."/>
            <person name="Perna N.T."/>
            <person name="Burland V."/>
            <person name="Riley M."/>
            <person name="Collado-Vides J."/>
            <person name="Glasner J.D."/>
            <person name="Rode C.K."/>
            <person name="Mayhew G.F."/>
            <person name="Gregor J."/>
            <person name="Davis N.W."/>
            <person name="Kirkpatrick H.A."/>
            <person name="Goeden M.A."/>
            <person name="Rose D.J."/>
            <person name="Mau B."/>
            <person name="Shao Y."/>
        </authorList>
    </citation>
    <scope>NUCLEOTIDE SEQUENCE [LARGE SCALE GENOMIC DNA]</scope>
    <source>
        <strain>K12 / MG1655 / ATCC 47076</strain>
    </source>
</reference>
<reference key="4">
    <citation type="journal article" date="2006" name="Mol. Syst. Biol.">
        <title>Highly accurate genome sequences of Escherichia coli K-12 strains MG1655 and W3110.</title>
        <authorList>
            <person name="Hayashi K."/>
            <person name="Morooka N."/>
            <person name="Yamamoto Y."/>
            <person name="Fujita K."/>
            <person name="Isono K."/>
            <person name="Choi S."/>
            <person name="Ohtsubo E."/>
            <person name="Baba T."/>
            <person name="Wanner B.L."/>
            <person name="Mori H."/>
            <person name="Horiuchi T."/>
        </authorList>
    </citation>
    <scope>NUCLEOTIDE SEQUENCE [LARGE SCALE GENOMIC DNA]</scope>
    <source>
        <strain>K12 / W3110 / ATCC 27325 / DSM 5911</strain>
    </source>
</reference>
<reference key="5">
    <citation type="journal article" date="2010" name="J. Mol. Biol.">
        <title>A bacterial GAP-like protein, YihI, regulating the GTPase of Der, an essential GTP-binding protein in Escherichia coli.</title>
        <authorList>
            <person name="Hwang J."/>
            <person name="Inouye M."/>
        </authorList>
    </citation>
    <scope>FUNCTION IN LARGE RIBOSOMAL SUBUNIT ASSEMBLY</scope>
    <scope>SUBUNIT</scope>
    <scope>INTERACTION WITH DER/ENGA</scope>
    <scope>INDUCTION</scope>
    <scope>MUTAGENESIS OF ARG-65; ARG-135; ARG-164 AND ARG-167</scope>
    <scope>DISRUPTION PHENOTYPE</scope>
</reference>
<sequence length="169" mass="19059">MKPSSSNSRSKGHAKARRKTREELDQEARDRKRQKKRRGHAPGSRAAGGNTTSGSKGQNAPKDPRIGSKTPIPLGVTEKVTKQHKPKSEKPMLSPQAELELLETDERLDALLERLEAGETLSAEEQSWVDAKLDRIDELMQKLGLSYDDDEEEEEDEKQEDMMRLLRGN</sequence>
<keyword id="KW-0343">GTPase activation</keyword>
<keyword id="KW-1185">Reference proteome</keyword>
<keyword id="KW-0690">Ribosome biogenesis</keyword>
<protein>
    <recommendedName>
        <fullName>Der GTPase-activating protein YihI</fullName>
        <shortName>GAP</shortName>
    </recommendedName>
</protein>
<evidence type="ECO:0000256" key="1">
    <source>
        <dbReference type="SAM" id="MobiDB-lite"/>
    </source>
</evidence>
<evidence type="ECO:0000269" key="2">
    <source>
    </source>
</evidence>
<evidence type="ECO:0000305" key="3"/>
<feature type="chain" id="PRO_0000209582" description="Der GTPase-activating protein YihI">
    <location>
        <begin position="1"/>
        <end position="169"/>
    </location>
</feature>
<feature type="region of interest" description="Disordered" evidence="1">
    <location>
        <begin position="1"/>
        <end position="98"/>
    </location>
</feature>
<feature type="region of interest" description="Not required for interaction with Der/Enga">
    <location>
        <begin position="1"/>
        <end position="45"/>
    </location>
</feature>
<feature type="region of interest" description="Arg/Lys rich">
    <location>
        <begin position="17"/>
        <end position="45"/>
    </location>
</feature>
<feature type="region of interest" description="Disordered" evidence="1">
    <location>
        <begin position="144"/>
        <end position="169"/>
    </location>
</feature>
<feature type="region of interest" description="Asp/Glu rich">
    <location>
        <begin position="148"/>
        <end position="157"/>
    </location>
</feature>
<feature type="compositionally biased region" description="Basic residues" evidence="1">
    <location>
        <begin position="10"/>
        <end position="19"/>
    </location>
</feature>
<feature type="compositionally biased region" description="Basic and acidic residues" evidence="1">
    <location>
        <begin position="20"/>
        <end position="30"/>
    </location>
</feature>
<feature type="compositionally biased region" description="Basic residues" evidence="1">
    <location>
        <begin position="31"/>
        <end position="40"/>
    </location>
</feature>
<feature type="compositionally biased region" description="Polar residues" evidence="1">
    <location>
        <begin position="49"/>
        <end position="58"/>
    </location>
</feature>
<feature type="compositionally biased region" description="Acidic residues" evidence="1">
    <location>
        <begin position="147"/>
        <end position="159"/>
    </location>
</feature>
<feature type="compositionally biased region" description="Basic and acidic residues" evidence="1">
    <location>
        <begin position="160"/>
        <end position="169"/>
    </location>
</feature>
<feature type="mutagenesis site" description="No change in ability to stimulate Der GTPase." evidence="2">
    <original>R</original>
    <variation>A</variation>
    <location>
        <position position="65"/>
    </location>
</feature>
<feature type="mutagenesis site" description="No change in ability to stimulate Der GTPase." evidence="2">
    <original>R</original>
    <variation>A</variation>
    <location>
        <position position="135"/>
    </location>
</feature>
<feature type="mutagenesis site" description="No change in ability to stimulate Der GTPase." evidence="2">
    <original>R</original>
    <variation>A</variation>
    <location>
        <position position="164"/>
    </location>
</feature>
<feature type="mutagenesis site" description="No change in ability to stimulate Der GTPase." evidence="2">
    <original>R</original>
    <variation>A</variation>
    <location>
        <position position="167"/>
    </location>
</feature>